<name>RPAB1_DICDI</name>
<feature type="chain" id="PRO_0000329306" description="DNA-directed RNA polymerases I, II, and III subunit rpabc1">
    <location>
        <begin position="1"/>
        <end position="197"/>
    </location>
</feature>
<keyword id="KW-0240">DNA-directed RNA polymerase</keyword>
<keyword id="KW-0539">Nucleus</keyword>
<keyword id="KW-1185">Reference proteome</keyword>
<keyword id="KW-0804">Transcription</keyword>
<sequence length="197" mass="23198">MEDINRLLQIRKTVLQMLSDREYIITAYEQEYPRESFVSRENLTMYCVKKDDPTDSIYVFFPDTPKVGVTQIKKYVDIMKDRQANRAIIVVQQNITPFAKQALAEFSQEKKITLEQFNEAELLVNITHHQLVPKHILLTKEEKLELLTRYKMKESQLPRIQTNDPVARYYGLSRGHVVKIVRPSETAGRYITYRLCV</sequence>
<proteinExistence type="inferred from homology"/>
<protein>
    <recommendedName>
        <fullName>DNA-directed RNA polymerases I, II, and III subunit rpabc1</fullName>
        <shortName>RNA polymerases I, II, and III subunit ABC1</shortName>
    </recommendedName>
    <alternativeName>
        <fullName>RPB5 homolog</fullName>
    </alternativeName>
</protein>
<organism>
    <name type="scientific">Dictyostelium discoideum</name>
    <name type="common">Social amoeba</name>
    <dbReference type="NCBI Taxonomy" id="44689"/>
    <lineage>
        <taxon>Eukaryota</taxon>
        <taxon>Amoebozoa</taxon>
        <taxon>Evosea</taxon>
        <taxon>Eumycetozoa</taxon>
        <taxon>Dictyostelia</taxon>
        <taxon>Dictyosteliales</taxon>
        <taxon>Dictyosteliaceae</taxon>
        <taxon>Dictyostelium</taxon>
    </lineage>
</organism>
<reference key="1">
    <citation type="journal article" date="2005" name="Nature">
        <title>The genome of the social amoeba Dictyostelium discoideum.</title>
        <authorList>
            <person name="Eichinger L."/>
            <person name="Pachebat J.A."/>
            <person name="Gloeckner G."/>
            <person name="Rajandream M.A."/>
            <person name="Sucgang R."/>
            <person name="Berriman M."/>
            <person name="Song J."/>
            <person name="Olsen R."/>
            <person name="Szafranski K."/>
            <person name="Xu Q."/>
            <person name="Tunggal B."/>
            <person name="Kummerfeld S."/>
            <person name="Madera M."/>
            <person name="Konfortov B.A."/>
            <person name="Rivero F."/>
            <person name="Bankier A.T."/>
            <person name="Lehmann R."/>
            <person name="Hamlin N."/>
            <person name="Davies R."/>
            <person name="Gaudet P."/>
            <person name="Fey P."/>
            <person name="Pilcher K."/>
            <person name="Chen G."/>
            <person name="Saunders D."/>
            <person name="Sodergren E.J."/>
            <person name="Davis P."/>
            <person name="Kerhornou A."/>
            <person name="Nie X."/>
            <person name="Hall N."/>
            <person name="Anjard C."/>
            <person name="Hemphill L."/>
            <person name="Bason N."/>
            <person name="Farbrother P."/>
            <person name="Desany B."/>
            <person name="Just E."/>
            <person name="Morio T."/>
            <person name="Rost R."/>
            <person name="Churcher C.M."/>
            <person name="Cooper J."/>
            <person name="Haydock S."/>
            <person name="van Driessche N."/>
            <person name="Cronin A."/>
            <person name="Goodhead I."/>
            <person name="Muzny D.M."/>
            <person name="Mourier T."/>
            <person name="Pain A."/>
            <person name="Lu M."/>
            <person name="Harper D."/>
            <person name="Lindsay R."/>
            <person name="Hauser H."/>
            <person name="James K.D."/>
            <person name="Quiles M."/>
            <person name="Madan Babu M."/>
            <person name="Saito T."/>
            <person name="Buchrieser C."/>
            <person name="Wardroper A."/>
            <person name="Felder M."/>
            <person name="Thangavelu M."/>
            <person name="Johnson D."/>
            <person name="Knights A."/>
            <person name="Loulseged H."/>
            <person name="Mungall K.L."/>
            <person name="Oliver K."/>
            <person name="Price C."/>
            <person name="Quail M.A."/>
            <person name="Urushihara H."/>
            <person name="Hernandez J."/>
            <person name="Rabbinowitsch E."/>
            <person name="Steffen D."/>
            <person name="Sanders M."/>
            <person name="Ma J."/>
            <person name="Kohara Y."/>
            <person name="Sharp S."/>
            <person name="Simmonds M.N."/>
            <person name="Spiegler S."/>
            <person name="Tivey A."/>
            <person name="Sugano S."/>
            <person name="White B."/>
            <person name="Walker D."/>
            <person name="Woodward J.R."/>
            <person name="Winckler T."/>
            <person name="Tanaka Y."/>
            <person name="Shaulsky G."/>
            <person name="Schleicher M."/>
            <person name="Weinstock G.M."/>
            <person name="Rosenthal A."/>
            <person name="Cox E.C."/>
            <person name="Chisholm R.L."/>
            <person name="Gibbs R.A."/>
            <person name="Loomis W.F."/>
            <person name="Platzer M."/>
            <person name="Kay R.R."/>
            <person name="Williams J.G."/>
            <person name="Dear P.H."/>
            <person name="Noegel A.A."/>
            <person name="Barrell B.G."/>
            <person name="Kuspa A."/>
        </authorList>
    </citation>
    <scope>NUCLEOTIDE SEQUENCE [LARGE SCALE GENOMIC DNA]</scope>
    <source>
        <strain>AX4</strain>
    </source>
</reference>
<comment type="function">
    <text evidence="1">DNA-dependent RNA polymerase catalyzes the transcription of DNA into RNA using the four ribonucleoside triphosphates as substrates. Common component of RNA polymerases I, II and III which synthesize ribosomal RNA precursors, mRNA precursors and many functional non-coding RNAs, and small RNAs, such as 5S rRNA and tRNAs, respectively. Pol II is the central component of the basal RNA polymerase II transcription machinery. Pols are composed of mobile elements that move relative to each other. In Pol II, RPB5 is part of the lower jaw surrounding the central large cleft and thought to grab the incoming DNA template. Seems to be the major component in this process (By similarity).</text>
</comment>
<comment type="subunit">
    <text evidence="1">Component of the RNA polymerase I (Pol I), RNA polymerase II (Pol II) and RNA polymerase III (Pol III) complexes consisting of at least 13, 12 and 17 subunits, respectively. In RNA Pol II, this subunit is present in 2-fold molar excess over the other subunits (By similarity).</text>
</comment>
<comment type="subcellular location">
    <subcellularLocation>
        <location evidence="1">Nucleus</location>
    </subcellularLocation>
</comment>
<comment type="similarity">
    <text evidence="2">Belongs to the archaeal Rpo5/eukaryotic RPB5 RNA polymerase subunit family.</text>
</comment>
<comment type="sequence caution" evidence="2">
    <conflict type="erroneous gene model prediction">
        <sequence resource="EMBL-CDS" id="EAL61802"/>
    </conflict>
</comment>
<evidence type="ECO:0000250" key="1"/>
<evidence type="ECO:0000305" key="2"/>
<gene>
    <name type="primary">polr2e</name>
    <name type="synonym">rpb5</name>
    <name type="ORF">DDB_G0291636</name>
</gene>
<accession>Q54EH2</accession>
<dbReference type="EMBL" id="AAFI02000177">
    <property type="protein sequence ID" value="EAL61802.1"/>
    <property type="status" value="ALT_SEQ"/>
    <property type="molecule type" value="Genomic_DNA"/>
</dbReference>
<dbReference type="RefSeq" id="XP_635268.1">
    <property type="nucleotide sequence ID" value="XM_630176.1"/>
</dbReference>
<dbReference type="SMR" id="Q54EH2"/>
<dbReference type="FunCoup" id="Q54EH2">
    <property type="interactions" value="962"/>
</dbReference>
<dbReference type="STRING" id="44689.Q54EH2"/>
<dbReference type="PaxDb" id="44689-DDB0216287"/>
<dbReference type="EnsemblProtists" id="EAL61802">
    <property type="protein sequence ID" value="EAL61802"/>
    <property type="gene ID" value="DDB_G0291636"/>
</dbReference>
<dbReference type="GeneID" id="8628212"/>
<dbReference type="KEGG" id="ddi:DDB_G0291636"/>
<dbReference type="dictyBase" id="DDB_G0291636">
    <property type="gene designation" value="rpb5"/>
</dbReference>
<dbReference type="VEuPathDB" id="AmoebaDB:DDB_G0291636"/>
<dbReference type="eggNOG" id="KOG3218">
    <property type="taxonomic scope" value="Eukaryota"/>
</dbReference>
<dbReference type="InParanoid" id="Q54EH2"/>
<dbReference type="PhylomeDB" id="Q54EH2"/>
<dbReference type="Reactome" id="R-DDI-113418">
    <property type="pathway name" value="Formation of the Early Elongation Complex"/>
</dbReference>
<dbReference type="Reactome" id="R-DDI-674695">
    <property type="pathway name" value="RNA Polymerase II Pre-transcription Events"/>
</dbReference>
<dbReference type="Reactome" id="R-DDI-6781823">
    <property type="pathway name" value="Formation of TC-NER Pre-Incision Complex"/>
</dbReference>
<dbReference type="Reactome" id="R-DDI-6782135">
    <property type="pathway name" value="Dual incision in TC-NER"/>
</dbReference>
<dbReference type="Reactome" id="R-DDI-6782210">
    <property type="pathway name" value="Gap-filling DNA repair synthesis and ligation in TC-NER"/>
</dbReference>
<dbReference type="Reactome" id="R-DDI-6796648">
    <property type="pathway name" value="TP53 Regulates Transcription of DNA Repair Genes"/>
</dbReference>
<dbReference type="Reactome" id="R-DDI-6807505">
    <property type="pathway name" value="RNA polymerase II transcribes snRNA genes"/>
</dbReference>
<dbReference type="Reactome" id="R-DDI-72086">
    <property type="pathway name" value="mRNA Capping"/>
</dbReference>
<dbReference type="Reactome" id="R-DDI-72163">
    <property type="pathway name" value="mRNA Splicing - Major Pathway"/>
</dbReference>
<dbReference type="Reactome" id="R-DDI-72203">
    <property type="pathway name" value="Processing of Capped Intron-Containing Pre-mRNA"/>
</dbReference>
<dbReference type="Reactome" id="R-DDI-73762">
    <property type="pathway name" value="RNA Polymerase I Transcription Initiation"/>
</dbReference>
<dbReference type="Reactome" id="R-DDI-73772">
    <property type="pathway name" value="RNA Polymerase I Promoter Escape"/>
</dbReference>
<dbReference type="Reactome" id="R-DDI-73776">
    <property type="pathway name" value="RNA Polymerase II Promoter Escape"/>
</dbReference>
<dbReference type="Reactome" id="R-DDI-73779">
    <property type="pathway name" value="RNA Polymerase II Transcription Pre-Initiation And Promoter Opening"/>
</dbReference>
<dbReference type="Reactome" id="R-DDI-75953">
    <property type="pathway name" value="RNA Polymerase II Transcription Initiation"/>
</dbReference>
<dbReference type="Reactome" id="R-DDI-76042">
    <property type="pathway name" value="RNA Polymerase II Transcription Initiation And Promoter Clearance"/>
</dbReference>
<dbReference type="Reactome" id="R-DDI-76061">
    <property type="pathway name" value="RNA Polymerase III Transcription Initiation From Type 1 Promoter"/>
</dbReference>
<dbReference type="Reactome" id="R-DDI-76066">
    <property type="pathway name" value="RNA Polymerase III Transcription Initiation From Type 2 Promoter"/>
</dbReference>
<dbReference type="Reactome" id="R-DDI-77075">
    <property type="pathway name" value="RNA Pol II CTD phosphorylation and interaction with CE"/>
</dbReference>
<dbReference type="Reactome" id="R-DDI-9018519">
    <property type="pathway name" value="Estrogen-dependent gene expression"/>
</dbReference>
<dbReference type="PRO" id="PR:Q54EH2"/>
<dbReference type="Proteomes" id="UP000002195">
    <property type="component" value="Chromosome 6"/>
</dbReference>
<dbReference type="GO" id="GO:0005736">
    <property type="term" value="C:RNA polymerase I complex"/>
    <property type="evidence" value="ECO:0000250"/>
    <property type="project" value="dictyBase"/>
</dbReference>
<dbReference type="GO" id="GO:0005665">
    <property type="term" value="C:RNA polymerase II, core complex"/>
    <property type="evidence" value="ECO:0000250"/>
    <property type="project" value="dictyBase"/>
</dbReference>
<dbReference type="GO" id="GO:0005666">
    <property type="term" value="C:RNA polymerase III complex"/>
    <property type="evidence" value="ECO:0000250"/>
    <property type="project" value="dictyBase"/>
</dbReference>
<dbReference type="GO" id="GO:0003677">
    <property type="term" value="F:DNA binding"/>
    <property type="evidence" value="ECO:0007669"/>
    <property type="project" value="InterPro"/>
</dbReference>
<dbReference type="GO" id="GO:0003899">
    <property type="term" value="F:DNA-directed RNA polymerase activity"/>
    <property type="evidence" value="ECO:0000250"/>
    <property type="project" value="dictyBase"/>
</dbReference>
<dbReference type="GO" id="GO:0006360">
    <property type="term" value="P:transcription by RNA polymerase I"/>
    <property type="evidence" value="ECO:0000250"/>
    <property type="project" value="dictyBase"/>
</dbReference>
<dbReference type="GO" id="GO:0006366">
    <property type="term" value="P:transcription by RNA polymerase II"/>
    <property type="evidence" value="ECO:0000250"/>
    <property type="project" value="dictyBase"/>
</dbReference>
<dbReference type="GO" id="GO:0006383">
    <property type="term" value="P:transcription by RNA polymerase III"/>
    <property type="evidence" value="ECO:0000250"/>
    <property type="project" value="dictyBase"/>
</dbReference>
<dbReference type="GO" id="GO:0006362">
    <property type="term" value="P:transcription elongation by RNA polymerase I"/>
    <property type="evidence" value="ECO:0000318"/>
    <property type="project" value="GO_Central"/>
</dbReference>
<dbReference type="GO" id="GO:0042797">
    <property type="term" value="P:tRNA transcription by RNA polymerase III"/>
    <property type="evidence" value="ECO:0000318"/>
    <property type="project" value="GO_Central"/>
</dbReference>
<dbReference type="FunFam" id="3.40.1340.10:FF:000001">
    <property type="entry name" value="DNA-directed RNA polymerases I, II, and III subunit RPABC1"/>
    <property type="match status" value="1"/>
</dbReference>
<dbReference type="FunFam" id="3.90.940.20:FF:000001">
    <property type="entry name" value="DNA-directed RNA polymerases I, II, and III subunit RPABC1"/>
    <property type="match status" value="1"/>
</dbReference>
<dbReference type="Gene3D" id="3.40.1340.10">
    <property type="entry name" value="RNA polymerase, Rpb5, N-terminal domain"/>
    <property type="match status" value="1"/>
</dbReference>
<dbReference type="Gene3D" id="3.90.940.20">
    <property type="entry name" value="RPB5-like RNA polymerase subunit"/>
    <property type="match status" value="1"/>
</dbReference>
<dbReference type="HAMAP" id="MF_00025">
    <property type="entry name" value="RNApol_Rpo5_RPB5"/>
    <property type="match status" value="1"/>
</dbReference>
<dbReference type="InterPro" id="IPR014381">
    <property type="entry name" value="Arch_Rpo5/euc_Rpb5"/>
</dbReference>
<dbReference type="InterPro" id="IPR005571">
    <property type="entry name" value="RNA_pol_Rpb5_N"/>
</dbReference>
<dbReference type="InterPro" id="IPR036710">
    <property type="entry name" value="RNA_pol_Rpb5_N_sf"/>
</dbReference>
<dbReference type="InterPro" id="IPR000783">
    <property type="entry name" value="RNA_pol_subH/Rpb5_C"/>
</dbReference>
<dbReference type="InterPro" id="IPR020608">
    <property type="entry name" value="RNA_pol_subH/Rpb5_CS"/>
</dbReference>
<dbReference type="InterPro" id="IPR035913">
    <property type="entry name" value="RPB5-like_sf"/>
</dbReference>
<dbReference type="NCBIfam" id="NF007129">
    <property type="entry name" value="PRK09570.1"/>
    <property type="match status" value="1"/>
</dbReference>
<dbReference type="PANTHER" id="PTHR10535">
    <property type="entry name" value="DNA-DIRECTED RNA POLYMERASES I, II, AND III SUBUNIT RPABC1"/>
    <property type="match status" value="1"/>
</dbReference>
<dbReference type="PANTHER" id="PTHR10535:SF0">
    <property type="entry name" value="DNA-DIRECTED RNA POLYMERASES I, II, AND III SUBUNIT RPABC1"/>
    <property type="match status" value="1"/>
</dbReference>
<dbReference type="Pfam" id="PF01191">
    <property type="entry name" value="RNA_pol_Rpb5_C"/>
    <property type="match status" value="1"/>
</dbReference>
<dbReference type="Pfam" id="PF03871">
    <property type="entry name" value="RNA_pol_Rpb5_N"/>
    <property type="match status" value="1"/>
</dbReference>
<dbReference type="PIRSF" id="PIRSF000747">
    <property type="entry name" value="RPB5"/>
    <property type="match status" value="1"/>
</dbReference>
<dbReference type="SUPFAM" id="SSF53036">
    <property type="entry name" value="Eukaryotic RPB5 N-terminal domain"/>
    <property type="match status" value="1"/>
</dbReference>
<dbReference type="SUPFAM" id="SSF55287">
    <property type="entry name" value="RPB5-like RNA polymerase subunit"/>
    <property type="match status" value="1"/>
</dbReference>
<dbReference type="PROSITE" id="PS01110">
    <property type="entry name" value="RNA_POL_H_23KD"/>
    <property type="match status" value="1"/>
</dbReference>